<comment type="function">
    <text evidence="1">A GTPase-activating protein (GAP) that modifies Der/EngA GTPase function. May play a role in ribosome biogenesis.</text>
</comment>
<comment type="subunit">
    <text evidence="1">Interacts with Der.</text>
</comment>
<comment type="similarity">
    <text evidence="1">Belongs to the YihI family.</text>
</comment>
<reference key="1">
    <citation type="submission" date="2008-05" db="EMBL/GenBank/DDBJ databases">
        <title>Complete sequence of Shigella boydii serotype 18 strain BS512.</title>
        <authorList>
            <person name="Rasko D.A."/>
            <person name="Rosovitz M."/>
            <person name="Maurelli A.T."/>
            <person name="Myers G."/>
            <person name="Seshadri R."/>
            <person name="Cer R."/>
            <person name="Jiang L."/>
            <person name="Ravel J."/>
            <person name="Sebastian Y."/>
        </authorList>
    </citation>
    <scope>NUCLEOTIDE SEQUENCE [LARGE SCALE GENOMIC DNA]</scope>
    <source>
        <strain>CDC 3083-94 / BS512</strain>
    </source>
</reference>
<protein>
    <recommendedName>
        <fullName evidence="1">Der GTPase-activating protein YihI</fullName>
    </recommendedName>
</protein>
<name>YIHI_SHIB3</name>
<accession>B2TVL2</accession>
<feature type="chain" id="PRO_1000136394" description="Der GTPase-activating protein YihI">
    <location>
        <begin position="1"/>
        <end position="169"/>
    </location>
</feature>
<feature type="region of interest" description="Disordered" evidence="2">
    <location>
        <begin position="1"/>
        <end position="98"/>
    </location>
</feature>
<feature type="region of interest" description="Disordered" evidence="2">
    <location>
        <begin position="144"/>
        <end position="169"/>
    </location>
</feature>
<feature type="compositionally biased region" description="Basic residues" evidence="2">
    <location>
        <begin position="10"/>
        <end position="19"/>
    </location>
</feature>
<feature type="compositionally biased region" description="Basic and acidic residues" evidence="2">
    <location>
        <begin position="20"/>
        <end position="30"/>
    </location>
</feature>
<feature type="compositionally biased region" description="Basic residues" evidence="2">
    <location>
        <begin position="31"/>
        <end position="40"/>
    </location>
</feature>
<feature type="compositionally biased region" description="Polar residues" evidence="2">
    <location>
        <begin position="49"/>
        <end position="58"/>
    </location>
</feature>
<feature type="compositionally biased region" description="Acidic residues" evidence="2">
    <location>
        <begin position="147"/>
        <end position="159"/>
    </location>
</feature>
<feature type="compositionally biased region" description="Basic and acidic residues" evidence="2">
    <location>
        <begin position="160"/>
        <end position="169"/>
    </location>
</feature>
<proteinExistence type="inferred from homology"/>
<organism>
    <name type="scientific">Shigella boydii serotype 18 (strain CDC 3083-94 / BS512)</name>
    <dbReference type="NCBI Taxonomy" id="344609"/>
    <lineage>
        <taxon>Bacteria</taxon>
        <taxon>Pseudomonadati</taxon>
        <taxon>Pseudomonadota</taxon>
        <taxon>Gammaproteobacteria</taxon>
        <taxon>Enterobacterales</taxon>
        <taxon>Enterobacteriaceae</taxon>
        <taxon>Shigella</taxon>
    </lineage>
</organism>
<keyword id="KW-0343">GTPase activation</keyword>
<keyword id="KW-1185">Reference proteome</keyword>
<keyword id="KW-0690">Ribosome biogenesis</keyword>
<evidence type="ECO:0000255" key="1">
    <source>
        <dbReference type="HAMAP-Rule" id="MF_01058"/>
    </source>
</evidence>
<evidence type="ECO:0000256" key="2">
    <source>
        <dbReference type="SAM" id="MobiDB-lite"/>
    </source>
</evidence>
<dbReference type="EMBL" id="CP001063">
    <property type="protein sequence ID" value="ACD09379.1"/>
    <property type="molecule type" value="Genomic_DNA"/>
</dbReference>
<dbReference type="RefSeq" id="WP_001295266.1">
    <property type="nucleotide sequence ID" value="NC_010658.1"/>
</dbReference>
<dbReference type="SMR" id="B2TVL2"/>
<dbReference type="STRING" id="344609.SbBS512_E4340"/>
<dbReference type="GeneID" id="75204333"/>
<dbReference type="KEGG" id="sbc:SbBS512_E4340"/>
<dbReference type="HOGENOM" id="CLU_094104_2_0_6"/>
<dbReference type="Proteomes" id="UP000001030">
    <property type="component" value="Chromosome"/>
</dbReference>
<dbReference type="GO" id="GO:0005096">
    <property type="term" value="F:GTPase activator activity"/>
    <property type="evidence" value="ECO:0007669"/>
    <property type="project" value="UniProtKB-KW"/>
</dbReference>
<dbReference type="GO" id="GO:0042254">
    <property type="term" value="P:ribosome biogenesis"/>
    <property type="evidence" value="ECO:0007669"/>
    <property type="project" value="UniProtKB-KW"/>
</dbReference>
<dbReference type="HAMAP" id="MF_01058">
    <property type="entry name" value="GAP_YihI"/>
    <property type="match status" value="1"/>
</dbReference>
<dbReference type="InterPro" id="IPR007336">
    <property type="entry name" value="YihI"/>
</dbReference>
<dbReference type="NCBIfam" id="NF003560">
    <property type="entry name" value="PRK05244.1-1"/>
    <property type="match status" value="1"/>
</dbReference>
<dbReference type="Pfam" id="PF04220">
    <property type="entry name" value="YihI"/>
    <property type="match status" value="1"/>
</dbReference>
<sequence>MKPSSSNSRSKGHAKARRKTREELDQEARDRKRQKKRRGHAPGSRAAGGNTTSGSKGQNAPKDPRIGSKTPIPLGVTEKVTKQHKPKSEKPMLSPQAELELLETDERLDALLERLEAGETLSAEEQSWVDAKLDRIDELMQKLGLSYDDDEEEEEDEKQEDMMRLLRGN</sequence>
<gene>
    <name evidence="1" type="primary">yihI</name>
    <name type="ordered locus">SbBS512_E4340</name>
</gene>